<accession>Q9LW20</accession>
<name>SKL1_ARATH</name>
<sequence>MEIFSASASLTLTGFVPRLLPLLSPQARTTLCKPLLSSSSTRLISCHSRIAPSRSLADQSASTGISVVDSDPIDVVKRKAMDIAPELKGASIFLVGINNSIKTNTGKLLAEALRYYYFDSDNLITEAAGGNVSAQALKEADEKAFQESETEVLKQLSSMGRLVVCAGDGAVQSLRNLALLRHGISIWIDVPLDITAKGDDDSFHSEPSPELFDTLKASYEKSRKGYETADVSISLEKIATKLEFEDLEAVTSEDIALEILKEIEKLTRVKKMMEEASRPF</sequence>
<reference key="1">
    <citation type="journal article" date="2000" name="DNA Res.">
        <title>Structural analysis of Arabidopsis thaliana chromosome 3. I. Sequence features of the regions of 4,504,864 bp covered by sixty P1 and TAC clones.</title>
        <authorList>
            <person name="Sato S."/>
            <person name="Nakamura Y."/>
            <person name="Kaneko T."/>
            <person name="Katoh T."/>
            <person name="Asamizu E."/>
            <person name="Tabata S."/>
        </authorList>
    </citation>
    <scope>NUCLEOTIDE SEQUENCE [LARGE SCALE GENOMIC DNA]</scope>
    <source>
        <strain>cv. Columbia</strain>
    </source>
</reference>
<reference key="2">
    <citation type="journal article" date="2017" name="Plant J.">
        <title>Araport11: a complete reannotation of the Arabidopsis thaliana reference genome.</title>
        <authorList>
            <person name="Cheng C.Y."/>
            <person name="Krishnakumar V."/>
            <person name="Chan A.P."/>
            <person name="Thibaud-Nissen F."/>
            <person name="Schobel S."/>
            <person name="Town C.D."/>
        </authorList>
    </citation>
    <scope>GENOME REANNOTATION</scope>
    <source>
        <strain>cv. Columbia</strain>
    </source>
</reference>
<reference key="3">
    <citation type="journal article" date="2009" name="DNA Res.">
        <title>Analysis of multiple occurrences of alternative splicing events in Arabidopsis thaliana using novel sequenced full-length cDNAs.</title>
        <authorList>
            <person name="Iida K."/>
            <person name="Fukami-Kobayashi K."/>
            <person name="Toyoda A."/>
            <person name="Sakaki Y."/>
            <person name="Kobayashi M."/>
            <person name="Seki M."/>
            <person name="Shinozaki K."/>
        </authorList>
    </citation>
    <scope>NUCLEOTIDE SEQUENCE [LARGE SCALE MRNA]</scope>
    <source>
        <strain>cv. Columbia</strain>
    </source>
</reference>
<reference key="4">
    <citation type="submission" date="2004-04" db="EMBL/GenBank/DDBJ databases">
        <title>Arabidopsis ORF clones.</title>
        <authorList>
            <person name="Shinn P."/>
            <person name="Chen H."/>
            <person name="Cheuk R.F."/>
            <person name="Kim C.J."/>
            <person name="Ecker J.R."/>
        </authorList>
    </citation>
    <scope>NUCLEOTIDE SEQUENCE [LARGE SCALE MRNA]</scope>
    <source>
        <strain>cv. Columbia</strain>
    </source>
</reference>
<reference key="5">
    <citation type="journal article" date="2008" name="PLoS Genet.">
        <title>Evolutionary diversification of plant shikimate kinase gene duplicates.</title>
        <authorList>
            <person name="Fucile G."/>
            <person name="Falconer S."/>
            <person name="Christendat D."/>
        </authorList>
    </citation>
    <scope>FUNCTION</scope>
    <scope>GENE FAMILY</scope>
    <scope>NOMENCLATURE</scope>
    <scope>DISRUPTION PHENOTYPE</scope>
</reference>
<protein>
    <recommendedName>
        <fullName>Probable inactive shikimate kinase like 1, chloroplastic</fullName>
        <shortName>AtSKL1</shortName>
    </recommendedName>
</protein>
<comment type="function">
    <text evidence="1">Required for chloroplast biogenesis.</text>
</comment>
<comment type="subcellular location">
    <subcellularLocation>
        <location evidence="2">Plastid</location>
        <location evidence="2">Chloroplast</location>
    </subcellularLocation>
</comment>
<comment type="disruption phenotype">
    <text evidence="1">Albino plants.</text>
</comment>
<comment type="similarity">
    <text evidence="2">Belongs to the shikimate kinase family.</text>
</comment>
<comment type="caution">
    <text evidence="3">SKL1 does not possess shikimate kinase activity in vitro probably because it lacks the conserved active sites and substrate binding sites of the shikimate kinase family.</text>
</comment>
<dbReference type="EMBL" id="AB016889">
    <property type="protein sequence ID" value="BAB01237.1"/>
    <property type="molecule type" value="Genomic_DNA"/>
</dbReference>
<dbReference type="EMBL" id="CP002686">
    <property type="protein sequence ID" value="AEE77235.1"/>
    <property type="molecule type" value="Genomic_DNA"/>
</dbReference>
<dbReference type="EMBL" id="CP002686">
    <property type="protein sequence ID" value="AEE77236.1"/>
    <property type="molecule type" value="Genomic_DNA"/>
</dbReference>
<dbReference type="EMBL" id="CP002686">
    <property type="protein sequence ID" value="AEE77237.1"/>
    <property type="molecule type" value="Genomic_DNA"/>
</dbReference>
<dbReference type="EMBL" id="AK318791">
    <property type="protein sequence ID" value="BAH56906.1"/>
    <property type="molecule type" value="mRNA"/>
</dbReference>
<dbReference type="EMBL" id="BT012132">
    <property type="protein sequence ID" value="AAS76227.1"/>
    <property type="molecule type" value="mRNA"/>
</dbReference>
<dbReference type="EMBL" id="BT012407">
    <property type="protein sequence ID" value="AAS92323.1"/>
    <property type="molecule type" value="mRNA"/>
</dbReference>
<dbReference type="RefSeq" id="NP_001118711.1">
    <property type="nucleotide sequence ID" value="NM_001125239.1"/>
</dbReference>
<dbReference type="RefSeq" id="NP_001118712.1">
    <property type="nucleotide sequence ID" value="NM_001125240.1"/>
</dbReference>
<dbReference type="RefSeq" id="NP_189325.2">
    <property type="nucleotide sequence ID" value="NM_113602.4"/>
</dbReference>
<dbReference type="SMR" id="Q9LW20"/>
<dbReference type="BioGRID" id="7636">
    <property type="interactions" value="4"/>
</dbReference>
<dbReference type="FunCoup" id="Q9LW20">
    <property type="interactions" value="892"/>
</dbReference>
<dbReference type="IntAct" id="Q9LW20">
    <property type="interactions" value="4"/>
</dbReference>
<dbReference type="STRING" id="3702.Q9LW20"/>
<dbReference type="PaxDb" id="3702-AT3G26900.2"/>
<dbReference type="ProteomicsDB" id="232659"/>
<dbReference type="EnsemblPlants" id="AT3G26900.1">
    <property type="protein sequence ID" value="AT3G26900.1"/>
    <property type="gene ID" value="AT3G26900"/>
</dbReference>
<dbReference type="EnsemblPlants" id="AT3G26900.2">
    <property type="protein sequence ID" value="AT3G26900.2"/>
    <property type="gene ID" value="AT3G26900"/>
</dbReference>
<dbReference type="EnsemblPlants" id="AT3G26900.3">
    <property type="protein sequence ID" value="AT3G26900.3"/>
    <property type="gene ID" value="AT3G26900"/>
</dbReference>
<dbReference type="GeneID" id="822306"/>
<dbReference type="Gramene" id="AT3G26900.1">
    <property type="protein sequence ID" value="AT3G26900.1"/>
    <property type="gene ID" value="AT3G26900"/>
</dbReference>
<dbReference type="Gramene" id="AT3G26900.2">
    <property type="protein sequence ID" value="AT3G26900.2"/>
    <property type="gene ID" value="AT3G26900"/>
</dbReference>
<dbReference type="Gramene" id="AT3G26900.3">
    <property type="protein sequence ID" value="AT3G26900.3"/>
    <property type="gene ID" value="AT3G26900"/>
</dbReference>
<dbReference type="KEGG" id="ath:AT3G26900"/>
<dbReference type="Araport" id="AT3G26900"/>
<dbReference type="TAIR" id="AT3G26900">
    <property type="gene designation" value="SKL1"/>
</dbReference>
<dbReference type="eggNOG" id="ENOG502QSF9">
    <property type="taxonomic scope" value="Eukaryota"/>
</dbReference>
<dbReference type="HOGENOM" id="CLU_057607_0_0_1"/>
<dbReference type="InParanoid" id="Q9LW20"/>
<dbReference type="OMA" id="ISIWVDV"/>
<dbReference type="OrthoDB" id="197068at2759"/>
<dbReference type="PhylomeDB" id="Q9LW20"/>
<dbReference type="PRO" id="PR:Q9LW20"/>
<dbReference type="Proteomes" id="UP000006548">
    <property type="component" value="Chromosome 3"/>
</dbReference>
<dbReference type="ExpressionAtlas" id="Q9LW20">
    <property type="expression patterns" value="baseline and differential"/>
</dbReference>
<dbReference type="GO" id="GO:0009507">
    <property type="term" value="C:chloroplast"/>
    <property type="evidence" value="ECO:0007005"/>
    <property type="project" value="TAIR"/>
</dbReference>
<dbReference type="GO" id="GO:0009570">
    <property type="term" value="C:chloroplast stroma"/>
    <property type="evidence" value="ECO:0007005"/>
    <property type="project" value="TAIR"/>
</dbReference>
<dbReference type="GO" id="GO:0005829">
    <property type="term" value="C:cytosol"/>
    <property type="evidence" value="ECO:0007005"/>
    <property type="project" value="TAIR"/>
</dbReference>
<dbReference type="GO" id="GO:0009658">
    <property type="term" value="P:chloroplast organization"/>
    <property type="evidence" value="ECO:0000315"/>
    <property type="project" value="TAIR"/>
</dbReference>
<dbReference type="GO" id="GO:0010027">
    <property type="term" value="P:thylakoid membrane organization"/>
    <property type="evidence" value="ECO:0000315"/>
    <property type="project" value="TAIR"/>
</dbReference>
<dbReference type="CDD" id="cd00464">
    <property type="entry name" value="SK"/>
    <property type="match status" value="1"/>
</dbReference>
<dbReference type="FunFam" id="3.40.50.300:FF:001033">
    <property type="entry name" value="Shikimate kinase 2, chloroplastic"/>
    <property type="match status" value="1"/>
</dbReference>
<dbReference type="Gene3D" id="3.40.50.300">
    <property type="entry name" value="P-loop containing nucleotide triphosphate hydrolases"/>
    <property type="match status" value="1"/>
</dbReference>
<dbReference type="InterPro" id="IPR027417">
    <property type="entry name" value="P-loop_NTPase"/>
</dbReference>
<dbReference type="InterPro" id="IPR031322">
    <property type="entry name" value="Shikimate/glucono_kinase"/>
</dbReference>
<dbReference type="InterPro" id="IPR000623">
    <property type="entry name" value="Shikimate_kinase/TSH1"/>
</dbReference>
<dbReference type="PANTHER" id="PTHR21087:SF4">
    <property type="entry name" value="INACTIVE SHIKIMATE KINASE LIKE 1, CHLOROPLASTIC-RELATED"/>
    <property type="match status" value="1"/>
</dbReference>
<dbReference type="PANTHER" id="PTHR21087">
    <property type="entry name" value="SHIKIMATE KINASE"/>
    <property type="match status" value="1"/>
</dbReference>
<dbReference type="Pfam" id="PF01202">
    <property type="entry name" value="SKI"/>
    <property type="match status" value="1"/>
</dbReference>
<dbReference type="PRINTS" id="PR01100">
    <property type="entry name" value="SHIKIMTKNASE"/>
</dbReference>
<dbReference type="SUPFAM" id="SSF52540">
    <property type="entry name" value="P-loop containing nucleoside triphosphate hydrolases"/>
    <property type="match status" value="1"/>
</dbReference>
<evidence type="ECO:0000269" key="1">
    <source>
    </source>
</evidence>
<evidence type="ECO:0000305" key="2"/>
<evidence type="ECO:0000305" key="3">
    <source>
    </source>
</evidence>
<keyword id="KW-0150">Chloroplast</keyword>
<keyword id="KW-0934">Plastid</keyword>
<keyword id="KW-1185">Reference proteome</keyword>
<keyword id="KW-0809">Transit peptide</keyword>
<proteinExistence type="evidence at transcript level"/>
<gene>
    <name type="primary">SKL1</name>
    <name type="ordered locus">At3g26900</name>
    <name type="ORF">MDJ14.24</name>
</gene>
<organism>
    <name type="scientific">Arabidopsis thaliana</name>
    <name type="common">Mouse-ear cress</name>
    <dbReference type="NCBI Taxonomy" id="3702"/>
    <lineage>
        <taxon>Eukaryota</taxon>
        <taxon>Viridiplantae</taxon>
        <taxon>Streptophyta</taxon>
        <taxon>Embryophyta</taxon>
        <taxon>Tracheophyta</taxon>
        <taxon>Spermatophyta</taxon>
        <taxon>Magnoliopsida</taxon>
        <taxon>eudicotyledons</taxon>
        <taxon>Gunneridae</taxon>
        <taxon>Pentapetalae</taxon>
        <taxon>rosids</taxon>
        <taxon>malvids</taxon>
        <taxon>Brassicales</taxon>
        <taxon>Brassicaceae</taxon>
        <taxon>Camelineae</taxon>
        <taxon>Arabidopsis</taxon>
    </lineage>
</organism>
<feature type="transit peptide" description="Chloroplast" evidence="2">
    <location>
        <begin position="1"/>
        <end position="54"/>
    </location>
</feature>
<feature type="chain" id="PRO_0000421111" description="Probable inactive shikimate kinase like 1, chloroplastic">
    <location>
        <begin position="55"/>
        <end position="280"/>
    </location>
</feature>